<reference key="1">
    <citation type="journal article" date="1999" name="Nature">
        <title>Sequence and analysis of chromosome 4 of the plant Arabidopsis thaliana.</title>
        <authorList>
            <person name="Mayer K.F.X."/>
            <person name="Schueller C."/>
            <person name="Wambutt R."/>
            <person name="Murphy G."/>
            <person name="Volckaert G."/>
            <person name="Pohl T."/>
            <person name="Duesterhoeft A."/>
            <person name="Stiekema W."/>
            <person name="Entian K.-D."/>
            <person name="Terryn N."/>
            <person name="Harris B."/>
            <person name="Ansorge W."/>
            <person name="Brandt P."/>
            <person name="Grivell L.A."/>
            <person name="Rieger M."/>
            <person name="Weichselgartner M."/>
            <person name="de Simone V."/>
            <person name="Obermaier B."/>
            <person name="Mache R."/>
            <person name="Mueller M."/>
            <person name="Kreis M."/>
            <person name="Delseny M."/>
            <person name="Puigdomenech P."/>
            <person name="Watson M."/>
            <person name="Schmidtheini T."/>
            <person name="Reichert B."/>
            <person name="Portetelle D."/>
            <person name="Perez-Alonso M."/>
            <person name="Boutry M."/>
            <person name="Bancroft I."/>
            <person name="Vos P."/>
            <person name="Hoheisel J."/>
            <person name="Zimmermann W."/>
            <person name="Wedler H."/>
            <person name="Ridley P."/>
            <person name="Langham S.-A."/>
            <person name="McCullagh B."/>
            <person name="Bilham L."/>
            <person name="Robben J."/>
            <person name="van der Schueren J."/>
            <person name="Grymonprez B."/>
            <person name="Chuang Y.-J."/>
            <person name="Vandenbussche F."/>
            <person name="Braeken M."/>
            <person name="Weltjens I."/>
            <person name="Voet M."/>
            <person name="Bastiaens I."/>
            <person name="Aert R."/>
            <person name="Defoor E."/>
            <person name="Weitzenegger T."/>
            <person name="Bothe G."/>
            <person name="Ramsperger U."/>
            <person name="Hilbert H."/>
            <person name="Braun M."/>
            <person name="Holzer E."/>
            <person name="Brandt A."/>
            <person name="Peters S."/>
            <person name="van Staveren M."/>
            <person name="Dirkse W."/>
            <person name="Mooijman P."/>
            <person name="Klein Lankhorst R."/>
            <person name="Rose M."/>
            <person name="Hauf J."/>
            <person name="Koetter P."/>
            <person name="Berneiser S."/>
            <person name="Hempel S."/>
            <person name="Feldpausch M."/>
            <person name="Lamberth S."/>
            <person name="Van den Daele H."/>
            <person name="De Keyser A."/>
            <person name="Buysshaert C."/>
            <person name="Gielen J."/>
            <person name="Villarroel R."/>
            <person name="De Clercq R."/>
            <person name="van Montagu M."/>
            <person name="Rogers J."/>
            <person name="Cronin A."/>
            <person name="Quail M.A."/>
            <person name="Bray-Allen S."/>
            <person name="Clark L."/>
            <person name="Doggett J."/>
            <person name="Hall S."/>
            <person name="Kay M."/>
            <person name="Lennard N."/>
            <person name="McLay K."/>
            <person name="Mayes R."/>
            <person name="Pettett A."/>
            <person name="Rajandream M.A."/>
            <person name="Lyne M."/>
            <person name="Benes V."/>
            <person name="Rechmann S."/>
            <person name="Borkova D."/>
            <person name="Bloecker H."/>
            <person name="Scharfe M."/>
            <person name="Grimm M."/>
            <person name="Loehnert T.-H."/>
            <person name="Dose S."/>
            <person name="de Haan M."/>
            <person name="Maarse A.C."/>
            <person name="Schaefer M."/>
            <person name="Mueller-Auer S."/>
            <person name="Gabel C."/>
            <person name="Fuchs M."/>
            <person name="Fartmann B."/>
            <person name="Granderath K."/>
            <person name="Dauner D."/>
            <person name="Herzl A."/>
            <person name="Neumann S."/>
            <person name="Argiriou A."/>
            <person name="Vitale D."/>
            <person name="Liguori R."/>
            <person name="Piravandi E."/>
            <person name="Massenet O."/>
            <person name="Quigley F."/>
            <person name="Clabauld G."/>
            <person name="Muendlein A."/>
            <person name="Felber R."/>
            <person name="Schnabl S."/>
            <person name="Hiller R."/>
            <person name="Schmidt W."/>
            <person name="Lecharny A."/>
            <person name="Aubourg S."/>
            <person name="Chefdor F."/>
            <person name="Cooke R."/>
            <person name="Berger C."/>
            <person name="Monfort A."/>
            <person name="Casacuberta E."/>
            <person name="Gibbons T."/>
            <person name="Weber N."/>
            <person name="Vandenbol M."/>
            <person name="Bargues M."/>
            <person name="Terol J."/>
            <person name="Torres A."/>
            <person name="Perez-Perez A."/>
            <person name="Purnelle B."/>
            <person name="Bent E."/>
            <person name="Johnson S."/>
            <person name="Tacon D."/>
            <person name="Jesse T."/>
            <person name="Heijnen L."/>
            <person name="Schwarz S."/>
            <person name="Scholler P."/>
            <person name="Heber S."/>
            <person name="Francs P."/>
            <person name="Bielke C."/>
            <person name="Frishman D."/>
            <person name="Haase D."/>
            <person name="Lemcke K."/>
            <person name="Mewes H.-W."/>
            <person name="Stocker S."/>
            <person name="Zaccaria P."/>
            <person name="Bevan M."/>
            <person name="Wilson R.K."/>
            <person name="de la Bastide M."/>
            <person name="Habermann K."/>
            <person name="Parnell L."/>
            <person name="Dedhia N."/>
            <person name="Gnoj L."/>
            <person name="Schutz K."/>
            <person name="Huang E."/>
            <person name="Spiegel L."/>
            <person name="Sekhon M."/>
            <person name="Murray J."/>
            <person name="Sheet P."/>
            <person name="Cordes M."/>
            <person name="Abu-Threideh J."/>
            <person name="Stoneking T."/>
            <person name="Kalicki J."/>
            <person name="Graves T."/>
            <person name="Harmon G."/>
            <person name="Edwards J."/>
            <person name="Latreille P."/>
            <person name="Courtney L."/>
            <person name="Cloud J."/>
            <person name="Abbott A."/>
            <person name="Scott K."/>
            <person name="Johnson D."/>
            <person name="Minx P."/>
            <person name="Bentley D."/>
            <person name="Fulton B."/>
            <person name="Miller N."/>
            <person name="Greco T."/>
            <person name="Kemp K."/>
            <person name="Kramer J."/>
            <person name="Fulton L."/>
            <person name="Mardis E."/>
            <person name="Dante M."/>
            <person name="Pepin K."/>
            <person name="Hillier L.W."/>
            <person name="Nelson J."/>
            <person name="Spieth J."/>
            <person name="Ryan E."/>
            <person name="Andrews S."/>
            <person name="Geisel C."/>
            <person name="Layman D."/>
            <person name="Du H."/>
            <person name="Ali J."/>
            <person name="Berghoff A."/>
            <person name="Jones K."/>
            <person name="Drone K."/>
            <person name="Cotton M."/>
            <person name="Joshu C."/>
            <person name="Antonoiu B."/>
            <person name="Zidanic M."/>
            <person name="Strong C."/>
            <person name="Sun H."/>
            <person name="Lamar B."/>
            <person name="Yordan C."/>
            <person name="Ma P."/>
            <person name="Zhong J."/>
            <person name="Preston R."/>
            <person name="Vil D."/>
            <person name="Shekher M."/>
            <person name="Matero A."/>
            <person name="Shah R."/>
            <person name="Swaby I.K."/>
            <person name="O'Shaughnessy A."/>
            <person name="Rodriguez M."/>
            <person name="Hoffman J."/>
            <person name="Till S."/>
            <person name="Granat S."/>
            <person name="Shohdy N."/>
            <person name="Hasegawa A."/>
            <person name="Hameed A."/>
            <person name="Lodhi M."/>
            <person name="Johnson A."/>
            <person name="Chen E."/>
            <person name="Marra M.A."/>
            <person name="Martienssen R."/>
            <person name="McCombie W.R."/>
        </authorList>
    </citation>
    <scope>NUCLEOTIDE SEQUENCE [LARGE SCALE GENOMIC DNA]</scope>
    <source>
        <strain>cv. Columbia</strain>
    </source>
</reference>
<reference key="2">
    <citation type="journal article" date="2017" name="Plant J.">
        <title>Araport11: a complete reannotation of the Arabidopsis thaliana reference genome.</title>
        <authorList>
            <person name="Cheng C.Y."/>
            <person name="Krishnakumar V."/>
            <person name="Chan A.P."/>
            <person name="Thibaud-Nissen F."/>
            <person name="Schobel S."/>
            <person name="Town C.D."/>
        </authorList>
    </citation>
    <scope>GENOME REANNOTATION</scope>
    <source>
        <strain>cv. Columbia</strain>
    </source>
</reference>
<reference key="3">
    <citation type="journal article" date="2000" name="Trends Plant Sci.">
        <title>F-box proteins in Arabidopsis.</title>
        <authorList>
            <person name="Xiao W."/>
            <person name="Jang J.-C."/>
        </authorList>
    </citation>
    <scope>GENE FAMILY</scope>
    <scope>NOMENCLATURE</scope>
</reference>
<keyword id="KW-0433">Leucine-rich repeat</keyword>
<keyword id="KW-1185">Reference proteome</keyword>
<keyword id="KW-0677">Repeat</keyword>
<name>FBL22_ARATH</name>
<proteinExistence type="predicted"/>
<sequence length="307" mass="35148">MVTSSSSPPLATSQLPVMKGEEKPSNWAELPPDLLSSILLRLSPLEILENARKVCRSWRRVSKDPLIWRRIDMRNLRRLYCIYAMEACCRHVVDLSQGGLLEFNIDQWRFQTTSLLNYMAERSSNLRRLRVKGGQITSVGIFEAIVKLPLLEELELLYCSIEEEHFKTIGQACPNLKTLKLVGFWSHLNESDNDALAIADTMPGLLHLQLISNGLTNIGLNAILDGCPHLECLDLRQCFNINLFGDLERQCLERIKDFRCPNDVLDDYNYVIFSDNGSIEDEKGEEEENYSYGSDDTEYGYRRSADF</sequence>
<dbReference type="EMBL" id="AL161503">
    <property type="protein sequence ID" value="CAB81091.1"/>
    <property type="molecule type" value="Genomic_DNA"/>
</dbReference>
<dbReference type="EMBL" id="CP002687">
    <property type="protein sequence ID" value="AEE82526.1"/>
    <property type="molecule type" value="Genomic_DNA"/>
</dbReference>
<dbReference type="PIR" id="A85069">
    <property type="entry name" value="A85069"/>
</dbReference>
<dbReference type="RefSeq" id="NP_567296.1">
    <property type="nucleotide sequence ID" value="NM_116787.1"/>
</dbReference>
<dbReference type="SMR" id="Q9M0U6"/>
<dbReference type="FunCoup" id="Q9M0U6">
    <property type="interactions" value="170"/>
</dbReference>
<dbReference type="STRING" id="3702.Q9M0U6"/>
<dbReference type="PaxDb" id="3702-AT4G05490.1"/>
<dbReference type="ProteomicsDB" id="222502"/>
<dbReference type="EnsemblPlants" id="AT4G05490.1">
    <property type="protein sequence ID" value="AT4G05490.1"/>
    <property type="gene ID" value="AT4G05490"/>
</dbReference>
<dbReference type="GeneID" id="825898"/>
<dbReference type="Gramene" id="AT4G05490.1">
    <property type="protein sequence ID" value="AT4G05490.1"/>
    <property type="gene ID" value="AT4G05490"/>
</dbReference>
<dbReference type="KEGG" id="ath:AT4G05490"/>
<dbReference type="Araport" id="AT4G05490"/>
<dbReference type="TAIR" id="AT4G05490"/>
<dbReference type="eggNOG" id="KOG1947">
    <property type="taxonomic scope" value="Eukaryota"/>
</dbReference>
<dbReference type="HOGENOM" id="CLU_044915_0_0_1"/>
<dbReference type="InParanoid" id="Q9M0U6"/>
<dbReference type="OMA" id="ACCRHVV"/>
<dbReference type="PhylomeDB" id="Q9M0U6"/>
<dbReference type="PRO" id="PR:Q9M0U6"/>
<dbReference type="Proteomes" id="UP000006548">
    <property type="component" value="Chromosome 4"/>
</dbReference>
<dbReference type="ExpressionAtlas" id="Q9M0U6">
    <property type="expression patterns" value="baseline and differential"/>
</dbReference>
<dbReference type="Gene3D" id="3.80.10.10">
    <property type="entry name" value="Ribonuclease Inhibitor"/>
    <property type="match status" value="1"/>
</dbReference>
<dbReference type="InterPro" id="IPR036047">
    <property type="entry name" value="F-box-like_dom_sf"/>
</dbReference>
<dbReference type="InterPro" id="IPR001810">
    <property type="entry name" value="F-box_dom"/>
</dbReference>
<dbReference type="InterPro" id="IPR032675">
    <property type="entry name" value="LRR_dom_sf"/>
</dbReference>
<dbReference type="InterPro" id="IPR055411">
    <property type="entry name" value="LRR_FXL15/At3g58940/PEG3-like"/>
</dbReference>
<dbReference type="PANTHER" id="PTHR38926">
    <property type="entry name" value="F-BOX DOMAIN CONTAINING PROTEIN, EXPRESSED"/>
    <property type="match status" value="1"/>
</dbReference>
<dbReference type="PANTHER" id="PTHR38926:SF2">
    <property type="entry name" value="F-BOX_LRR-REPEAT PROTEIN 21-RELATED"/>
    <property type="match status" value="1"/>
</dbReference>
<dbReference type="Pfam" id="PF12937">
    <property type="entry name" value="F-box-like"/>
    <property type="match status" value="1"/>
</dbReference>
<dbReference type="Pfam" id="PF24758">
    <property type="entry name" value="LRR_At5g56370"/>
    <property type="match status" value="1"/>
</dbReference>
<dbReference type="SMART" id="SM00256">
    <property type="entry name" value="FBOX"/>
    <property type="match status" value="1"/>
</dbReference>
<dbReference type="SUPFAM" id="SSF81383">
    <property type="entry name" value="F-box domain"/>
    <property type="match status" value="1"/>
</dbReference>
<dbReference type="SUPFAM" id="SSF52047">
    <property type="entry name" value="RNI-like"/>
    <property type="match status" value="1"/>
</dbReference>
<dbReference type="PROSITE" id="PS50181">
    <property type="entry name" value="FBOX"/>
    <property type="match status" value="1"/>
</dbReference>
<accession>Q9M0U6</accession>
<feature type="chain" id="PRO_0000272261" description="Putative F-box/LRR-repeat protein 22">
    <location>
        <begin position="1"/>
        <end position="307"/>
    </location>
</feature>
<feature type="domain" description="F-box" evidence="1">
    <location>
        <begin position="24"/>
        <end position="71"/>
    </location>
</feature>
<feature type="repeat" description="LRR 1">
    <location>
        <begin position="108"/>
        <end position="133"/>
    </location>
</feature>
<feature type="repeat" description="LRR 2">
    <location>
        <begin position="158"/>
        <end position="183"/>
    </location>
</feature>
<feature type="repeat" description="LRR 3">
    <location>
        <begin position="185"/>
        <end position="210"/>
    </location>
</feature>
<feature type="repeat" description="LRR 4">
    <location>
        <begin position="212"/>
        <end position="237"/>
    </location>
</feature>
<feature type="repeat" description="LRR 5">
    <location>
        <begin position="244"/>
        <end position="270"/>
    </location>
</feature>
<feature type="region of interest" description="Disordered" evidence="2">
    <location>
        <begin position="1"/>
        <end position="26"/>
    </location>
</feature>
<feature type="region of interest" description="Disordered" evidence="2">
    <location>
        <begin position="279"/>
        <end position="307"/>
    </location>
</feature>
<feature type="compositionally biased region" description="Polar residues" evidence="2">
    <location>
        <begin position="1"/>
        <end position="15"/>
    </location>
</feature>
<feature type="compositionally biased region" description="Acidic residues" evidence="2">
    <location>
        <begin position="279"/>
        <end position="289"/>
    </location>
</feature>
<evidence type="ECO:0000255" key="1">
    <source>
        <dbReference type="PROSITE-ProRule" id="PRU00080"/>
    </source>
</evidence>
<evidence type="ECO:0000256" key="2">
    <source>
        <dbReference type="SAM" id="MobiDB-lite"/>
    </source>
</evidence>
<gene>
    <name type="primary">FBL22</name>
    <name type="ordered locus">At4g05490</name>
    <name type="ORF">C6L9.170</name>
</gene>
<protein>
    <recommendedName>
        <fullName>Putative F-box/LRR-repeat protein 22</fullName>
    </recommendedName>
</protein>
<organism>
    <name type="scientific">Arabidopsis thaliana</name>
    <name type="common">Mouse-ear cress</name>
    <dbReference type="NCBI Taxonomy" id="3702"/>
    <lineage>
        <taxon>Eukaryota</taxon>
        <taxon>Viridiplantae</taxon>
        <taxon>Streptophyta</taxon>
        <taxon>Embryophyta</taxon>
        <taxon>Tracheophyta</taxon>
        <taxon>Spermatophyta</taxon>
        <taxon>Magnoliopsida</taxon>
        <taxon>eudicotyledons</taxon>
        <taxon>Gunneridae</taxon>
        <taxon>Pentapetalae</taxon>
        <taxon>rosids</taxon>
        <taxon>malvids</taxon>
        <taxon>Brassicales</taxon>
        <taxon>Brassicaceae</taxon>
        <taxon>Camelineae</taxon>
        <taxon>Arabidopsis</taxon>
    </lineage>
</organism>